<keyword id="KW-0963">Cytoplasm</keyword>
<keyword id="KW-0251">Elongation factor</keyword>
<keyword id="KW-0342">GTP-binding</keyword>
<keyword id="KW-0378">Hydrolase</keyword>
<keyword id="KW-0460">Magnesium</keyword>
<keyword id="KW-0479">Metal-binding</keyword>
<keyword id="KW-0547">Nucleotide-binding</keyword>
<keyword id="KW-0648">Protein biosynthesis</keyword>
<gene>
    <name evidence="2" type="primary">tuf1</name>
</gene>
<proteinExistence type="inferred from homology"/>
<protein>
    <recommendedName>
        <fullName evidence="2">Elongation factor Tu-1</fullName>
        <shortName evidence="2">EF-Tu-1</shortName>
        <ecNumber evidence="2">3.6.5.3</ecNumber>
    </recommendedName>
</protein>
<accession>P29542</accession>
<name>EFTU1_STRRA</name>
<dbReference type="EC" id="3.6.5.3" evidence="2"/>
<dbReference type="EMBL" id="X67057">
    <property type="protein sequence ID" value="CAA47442.1"/>
    <property type="molecule type" value="Genomic_DNA"/>
</dbReference>
<dbReference type="PIR" id="S23908">
    <property type="entry name" value="S23908"/>
</dbReference>
<dbReference type="SMR" id="P29542"/>
<dbReference type="GO" id="GO:0005829">
    <property type="term" value="C:cytosol"/>
    <property type="evidence" value="ECO:0007669"/>
    <property type="project" value="TreeGrafter"/>
</dbReference>
<dbReference type="GO" id="GO:0005525">
    <property type="term" value="F:GTP binding"/>
    <property type="evidence" value="ECO:0007669"/>
    <property type="project" value="UniProtKB-UniRule"/>
</dbReference>
<dbReference type="GO" id="GO:0003924">
    <property type="term" value="F:GTPase activity"/>
    <property type="evidence" value="ECO:0007669"/>
    <property type="project" value="InterPro"/>
</dbReference>
<dbReference type="GO" id="GO:0003746">
    <property type="term" value="F:translation elongation factor activity"/>
    <property type="evidence" value="ECO:0007669"/>
    <property type="project" value="UniProtKB-UniRule"/>
</dbReference>
<dbReference type="CDD" id="cd01884">
    <property type="entry name" value="EF_Tu"/>
    <property type="match status" value="1"/>
</dbReference>
<dbReference type="CDD" id="cd03697">
    <property type="entry name" value="EFTU_II"/>
    <property type="match status" value="1"/>
</dbReference>
<dbReference type="CDD" id="cd03707">
    <property type="entry name" value="EFTU_III"/>
    <property type="match status" value="1"/>
</dbReference>
<dbReference type="FunFam" id="2.40.30.10:FF:000001">
    <property type="entry name" value="Elongation factor Tu"/>
    <property type="match status" value="1"/>
</dbReference>
<dbReference type="FunFam" id="3.40.50.300:FF:000003">
    <property type="entry name" value="Elongation factor Tu"/>
    <property type="match status" value="1"/>
</dbReference>
<dbReference type="Gene3D" id="3.40.50.300">
    <property type="entry name" value="P-loop containing nucleotide triphosphate hydrolases"/>
    <property type="match status" value="1"/>
</dbReference>
<dbReference type="Gene3D" id="2.40.30.10">
    <property type="entry name" value="Translation factors"/>
    <property type="match status" value="2"/>
</dbReference>
<dbReference type="HAMAP" id="MF_00118_B">
    <property type="entry name" value="EF_Tu_B"/>
    <property type="match status" value="1"/>
</dbReference>
<dbReference type="InterPro" id="IPR041709">
    <property type="entry name" value="EF-Tu_GTP-bd"/>
</dbReference>
<dbReference type="InterPro" id="IPR050055">
    <property type="entry name" value="EF-Tu_GTPase"/>
</dbReference>
<dbReference type="InterPro" id="IPR004161">
    <property type="entry name" value="EFTu-like_2"/>
</dbReference>
<dbReference type="InterPro" id="IPR033720">
    <property type="entry name" value="EFTU_2"/>
</dbReference>
<dbReference type="InterPro" id="IPR031157">
    <property type="entry name" value="G_TR_CS"/>
</dbReference>
<dbReference type="InterPro" id="IPR027417">
    <property type="entry name" value="P-loop_NTPase"/>
</dbReference>
<dbReference type="InterPro" id="IPR005225">
    <property type="entry name" value="Small_GTP-bd"/>
</dbReference>
<dbReference type="InterPro" id="IPR000795">
    <property type="entry name" value="T_Tr_GTP-bd_dom"/>
</dbReference>
<dbReference type="InterPro" id="IPR009000">
    <property type="entry name" value="Transl_B-barrel_sf"/>
</dbReference>
<dbReference type="InterPro" id="IPR009001">
    <property type="entry name" value="Transl_elong_EF1A/Init_IF2_C"/>
</dbReference>
<dbReference type="InterPro" id="IPR004541">
    <property type="entry name" value="Transl_elong_EFTu/EF1A_bac/org"/>
</dbReference>
<dbReference type="InterPro" id="IPR004160">
    <property type="entry name" value="Transl_elong_EFTu/EF1A_C"/>
</dbReference>
<dbReference type="NCBIfam" id="TIGR00485">
    <property type="entry name" value="EF-Tu"/>
    <property type="match status" value="1"/>
</dbReference>
<dbReference type="NCBIfam" id="NF000766">
    <property type="entry name" value="PRK00049.1"/>
    <property type="match status" value="1"/>
</dbReference>
<dbReference type="NCBIfam" id="NF009372">
    <property type="entry name" value="PRK12735.1"/>
    <property type="match status" value="1"/>
</dbReference>
<dbReference type="NCBIfam" id="NF009373">
    <property type="entry name" value="PRK12736.1"/>
    <property type="match status" value="1"/>
</dbReference>
<dbReference type="NCBIfam" id="TIGR00231">
    <property type="entry name" value="small_GTP"/>
    <property type="match status" value="1"/>
</dbReference>
<dbReference type="PANTHER" id="PTHR43721:SF22">
    <property type="entry name" value="ELONGATION FACTOR TU, MITOCHONDRIAL"/>
    <property type="match status" value="1"/>
</dbReference>
<dbReference type="PANTHER" id="PTHR43721">
    <property type="entry name" value="ELONGATION FACTOR TU-RELATED"/>
    <property type="match status" value="1"/>
</dbReference>
<dbReference type="Pfam" id="PF00009">
    <property type="entry name" value="GTP_EFTU"/>
    <property type="match status" value="1"/>
</dbReference>
<dbReference type="Pfam" id="PF03144">
    <property type="entry name" value="GTP_EFTU_D2"/>
    <property type="match status" value="1"/>
</dbReference>
<dbReference type="Pfam" id="PF03143">
    <property type="entry name" value="GTP_EFTU_D3"/>
    <property type="match status" value="1"/>
</dbReference>
<dbReference type="PRINTS" id="PR00315">
    <property type="entry name" value="ELONGATNFCT"/>
</dbReference>
<dbReference type="SUPFAM" id="SSF50465">
    <property type="entry name" value="EF-Tu/eEF-1alpha/eIF2-gamma C-terminal domain"/>
    <property type="match status" value="1"/>
</dbReference>
<dbReference type="SUPFAM" id="SSF52540">
    <property type="entry name" value="P-loop containing nucleoside triphosphate hydrolases"/>
    <property type="match status" value="1"/>
</dbReference>
<dbReference type="SUPFAM" id="SSF50447">
    <property type="entry name" value="Translation proteins"/>
    <property type="match status" value="1"/>
</dbReference>
<dbReference type="PROSITE" id="PS00301">
    <property type="entry name" value="G_TR_1"/>
    <property type="match status" value="1"/>
</dbReference>
<dbReference type="PROSITE" id="PS51722">
    <property type="entry name" value="G_TR_2"/>
    <property type="match status" value="1"/>
</dbReference>
<sequence length="397" mass="43918">MAKAKFERTKPHVNIGTIGHIDHGKTTLTAAITKVLHDAYPDLNEATPFDNIDKAPEERQRGITISIAHVEYQTEARHYAHVDCPGHADYIKNMITGAAQMDGAILVVAATDGPMPQTKEHVLLARQVGVPYIVVALNKADMVDDEEIMELVELEVRELLSEYEFPGDDLPVVRVSALKALEGDAQWTQSVLDLMKAVDESIPEPERDVDKPFLMPIEDVFTITGRGTVVTGRIERGVLKVNETVDIIGIKTEKTTTTVTGIEMFRKLLDEGQAGENVGLLLRGIKREDVERGQVIIKPGSVTPHTEFEAQAYILSKDEGGRHTPFFNNYRPQFYFRTTDVTGVVHLPEGTEMVMPGDNTEMRVELIQPVAMEEGLKFAIREGGRTVGAGQVTKIVK</sequence>
<comment type="function">
    <text evidence="2">GTP hydrolase that promotes the GTP-dependent binding of aminoacyl-tRNA to the A-site of ribosomes during protein biosynthesis.</text>
</comment>
<comment type="catalytic activity">
    <reaction evidence="2">
        <text>GTP + H2O = GDP + phosphate + H(+)</text>
        <dbReference type="Rhea" id="RHEA:19669"/>
        <dbReference type="ChEBI" id="CHEBI:15377"/>
        <dbReference type="ChEBI" id="CHEBI:15378"/>
        <dbReference type="ChEBI" id="CHEBI:37565"/>
        <dbReference type="ChEBI" id="CHEBI:43474"/>
        <dbReference type="ChEBI" id="CHEBI:58189"/>
        <dbReference type="EC" id="3.6.5.3"/>
    </reaction>
    <physiologicalReaction direction="left-to-right" evidence="2">
        <dbReference type="Rhea" id="RHEA:19670"/>
    </physiologicalReaction>
</comment>
<comment type="subunit">
    <text evidence="2">Monomer.</text>
</comment>
<comment type="subcellular location">
    <subcellularLocation>
        <location evidence="2">Cytoplasm</location>
    </subcellularLocation>
</comment>
<comment type="similarity">
    <text evidence="2">Belongs to the TRAFAC class translation factor GTPase superfamily. Classic translation factor GTPase family. EF-Tu/EF-1A subfamily.</text>
</comment>
<reference key="1">
    <citation type="journal article" date="1994" name="Microbiology">
        <title>Three tuf-like genes in the kirromycin producer Streptomyces ramocissimus.</title>
        <authorList>
            <person name="Vijgenboom E."/>
            <person name="Woudt L.P."/>
            <person name="Heinstra P.W.H."/>
            <person name="Rietveld K."/>
            <person name="van Haarlem J."/>
            <person name="van Wezel G.P."/>
            <person name="Shochat S."/>
            <person name="Bosch L."/>
        </authorList>
    </citation>
    <scope>NUCLEOTIDE SEQUENCE [GENOMIC DNA]</scope>
</reference>
<feature type="chain" id="PRO_0000091413" description="Elongation factor Tu-1">
    <location>
        <begin position="1"/>
        <end position="397"/>
    </location>
</feature>
<feature type="domain" description="tr-type G">
    <location>
        <begin position="10"/>
        <end position="206"/>
    </location>
</feature>
<feature type="region of interest" description="G1" evidence="1">
    <location>
        <begin position="19"/>
        <end position="26"/>
    </location>
</feature>
<feature type="region of interest" description="G2" evidence="1">
    <location>
        <begin position="62"/>
        <end position="66"/>
    </location>
</feature>
<feature type="region of interest" description="G3" evidence="1">
    <location>
        <begin position="83"/>
        <end position="86"/>
    </location>
</feature>
<feature type="region of interest" description="G4" evidence="1">
    <location>
        <begin position="138"/>
        <end position="141"/>
    </location>
</feature>
<feature type="region of interest" description="G5" evidence="1">
    <location>
        <begin position="176"/>
        <end position="178"/>
    </location>
</feature>
<feature type="binding site" evidence="2">
    <location>
        <begin position="19"/>
        <end position="26"/>
    </location>
    <ligand>
        <name>GTP</name>
        <dbReference type="ChEBI" id="CHEBI:37565"/>
    </ligand>
</feature>
<feature type="binding site" evidence="2">
    <location>
        <position position="26"/>
    </location>
    <ligand>
        <name>Mg(2+)</name>
        <dbReference type="ChEBI" id="CHEBI:18420"/>
    </ligand>
</feature>
<feature type="binding site" evidence="2">
    <location>
        <begin position="83"/>
        <end position="87"/>
    </location>
    <ligand>
        <name>GTP</name>
        <dbReference type="ChEBI" id="CHEBI:37565"/>
    </ligand>
</feature>
<feature type="binding site" evidence="2">
    <location>
        <begin position="138"/>
        <end position="141"/>
    </location>
    <ligand>
        <name>GTP</name>
        <dbReference type="ChEBI" id="CHEBI:37565"/>
    </ligand>
</feature>
<organism>
    <name type="scientific">Streptomyces ramocissimus</name>
    <dbReference type="NCBI Taxonomy" id="1925"/>
    <lineage>
        <taxon>Bacteria</taxon>
        <taxon>Bacillati</taxon>
        <taxon>Actinomycetota</taxon>
        <taxon>Actinomycetes</taxon>
        <taxon>Kitasatosporales</taxon>
        <taxon>Streptomycetaceae</taxon>
        <taxon>Streptomyces</taxon>
    </lineage>
</organism>
<evidence type="ECO:0000250" key="1"/>
<evidence type="ECO:0000255" key="2">
    <source>
        <dbReference type="HAMAP-Rule" id="MF_00118"/>
    </source>
</evidence>